<evidence type="ECO:0000250" key="1"/>
<evidence type="ECO:0000255" key="2">
    <source>
        <dbReference type="PROSITE-ProRule" id="PRU00107"/>
    </source>
</evidence>
<evidence type="ECO:0000255" key="3">
    <source>
        <dbReference type="PROSITE-ProRule" id="PRU00140"/>
    </source>
</evidence>
<evidence type="ECO:0000255" key="4">
    <source>
        <dbReference type="PROSITE-ProRule" id="PRU00141"/>
    </source>
</evidence>
<evidence type="ECO:0000255" key="5">
    <source>
        <dbReference type="PROSITE-ProRule" id="PRU00169"/>
    </source>
</evidence>
<evidence type="ECO:0000256" key="6">
    <source>
        <dbReference type="SAM" id="MobiDB-lite"/>
    </source>
</evidence>
<evidence type="ECO:0000269" key="7">
    <source>
    </source>
</evidence>
<evidence type="ECO:0000305" key="8"/>
<evidence type="ECO:0000312" key="9">
    <source>
        <dbReference type="EMBL" id="CAB93498.1"/>
    </source>
</evidence>
<organism>
    <name type="scientific">Emericella nidulans (strain FGSC A4 / ATCC 38163 / CBS 112.46 / NRRL 194 / M139)</name>
    <name type="common">Aspergillus nidulans</name>
    <dbReference type="NCBI Taxonomy" id="227321"/>
    <lineage>
        <taxon>Eukaryota</taxon>
        <taxon>Fungi</taxon>
        <taxon>Dikarya</taxon>
        <taxon>Ascomycota</taxon>
        <taxon>Pezizomycotina</taxon>
        <taxon>Eurotiomycetes</taxon>
        <taxon>Eurotiomycetidae</taxon>
        <taxon>Eurotiales</taxon>
        <taxon>Aspergillaceae</taxon>
        <taxon>Aspergillus</taxon>
        <taxon>Aspergillus subgen. Nidulantes</taxon>
    </lineage>
</organism>
<comment type="function">
    <text evidence="7 8">May be part of a two-component regulatory system required for formation of conidia on certain growth media.</text>
</comment>
<comment type="catalytic activity">
    <reaction>
        <text>ATP + protein L-histidine = ADP + protein N-phospho-L-histidine.</text>
        <dbReference type="EC" id="2.7.13.3"/>
    </reaction>
</comment>
<comment type="subcellular location">
    <subcellularLocation>
        <location evidence="8">Cytoplasm</location>
    </subcellularLocation>
</comment>
<comment type="PTM">
    <text evidence="1">Activation probably requires a transfer of a phosphate group between a His in the histidine kinase domain and an Asp of the response regulatory domain.</text>
</comment>
<comment type="sequence caution" evidence="8">
    <conflict type="frameshift">
        <sequence resource="EMBL-CDS" id="CAB93498"/>
    </conflict>
</comment>
<keyword id="KW-0067">ATP-binding</keyword>
<keyword id="KW-0183">Conidiation</keyword>
<keyword id="KW-0963">Cytoplasm</keyword>
<keyword id="KW-0418">Kinase</keyword>
<keyword id="KW-0547">Nucleotide-binding</keyword>
<keyword id="KW-0597">Phosphoprotein</keyword>
<keyword id="KW-1185">Reference proteome</keyword>
<keyword id="KW-0677">Repeat</keyword>
<keyword id="KW-0749">Sporulation</keyword>
<keyword id="KW-0808">Transferase</keyword>
<keyword id="KW-0902">Two-component regulatory system</keyword>
<dbReference type="EC" id="2.7.13.3"/>
<dbReference type="EMBL" id="AJ271843">
    <property type="protein sequence ID" value="CAB93498.1"/>
    <property type="status" value="ALT_FRAME"/>
    <property type="molecule type" value="Genomic_DNA"/>
</dbReference>
<dbReference type="EMBL" id="AACD01000093">
    <property type="protein sequence ID" value="EAA62456.1"/>
    <property type="molecule type" value="Genomic_DNA"/>
</dbReference>
<dbReference type="EMBL" id="BN001305">
    <property type="protein sequence ID" value="CBF82150.1"/>
    <property type="molecule type" value="Genomic_DNA"/>
</dbReference>
<dbReference type="RefSeq" id="XP_662900.1">
    <property type="nucleotide sequence ID" value="XM_657808.2"/>
</dbReference>
<dbReference type="SMR" id="Q9P896"/>
<dbReference type="STRING" id="227321.Q9P896"/>
<dbReference type="EnsemblFungi" id="CBF82150">
    <property type="protein sequence ID" value="CBF82150"/>
    <property type="gene ID" value="ANIA_05296"/>
</dbReference>
<dbReference type="GeneID" id="2871585"/>
<dbReference type="KEGG" id="ani:ANIA_05296"/>
<dbReference type="VEuPathDB" id="FungiDB:AN5296"/>
<dbReference type="eggNOG" id="KOG0519">
    <property type="taxonomic scope" value="Eukaryota"/>
</dbReference>
<dbReference type="HOGENOM" id="CLU_000445_114_15_1"/>
<dbReference type="InParanoid" id="Q9P896"/>
<dbReference type="OMA" id="LWKWIGS"/>
<dbReference type="OrthoDB" id="60033at2759"/>
<dbReference type="Proteomes" id="UP000000560">
    <property type="component" value="Chromosome V"/>
</dbReference>
<dbReference type="GO" id="GO:0005737">
    <property type="term" value="C:cytoplasm"/>
    <property type="evidence" value="ECO:0000303"/>
    <property type="project" value="UniProtKB"/>
</dbReference>
<dbReference type="GO" id="GO:0005524">
    <property type="term" value="F:ATP binding"/>
    <property type="evidence" value="ECO:0007669"/>
    <property type="project" value="UniProtKB-KW"/>
</dbReference>
<dbReference type="GO" id="GO:0000156">
    <property type="term" value="F:phosphorelay response regulator activity"/>
    <property type="evidence" value="ECO:0000247"/>
    <property type="project" value="AspGD"/>
</dbReference>
<dbReference type="GO" id="GO:0000155">
    <property type="term" value="F:phosphorelay sensor kinase activity"/>
    <property type="evidence" value="ECO:0007669"/>
    <property type="project" value="InterPro"/>
</dbReference>
<dbReference type="GO" id="GO:0004673">
    <property type="term" value="F:protein histidine kinase activity"/>
    <property type="evidence" value="ECO:0000247"/>
    <property type="project" value="AspGD"/>
</dbReference>
<dbReference type="GO" id="GO:0030437">
    <property type="term" value="P:ascospore formation"/>
    <property type="evidence" value="ECO:0000315"/>
    <property type="project" value="UniProtKB"/>
</dbReference>
<dbReference type="GO" id="GO:0048315">
    <property type="term" value="P:conidium formation"/>
    <property type="evidence" value="ECO:0000315"/>
    <property type="project" value="AspGD"/>
</dbReference>
<dbReference type="GO" id="GO:0000160">
    <property type="term" value="P:phosphorelay signal transduction system"/>
    <property type="evidence" value="ECO:0000247"/>
    <property type="project" value="AspGD"/>
</dbReference>
<dbReference type="GO" id="GO:0075306">
    <property type="term" value="P:regulation of conidium formation"/>
    <property type="evidence" value="ECO:0000315"/>
    <property type="project" value="AspGD"/>
</dbReference>
<dbReference type="CDD" id="cd16922">
    <property type="entry name" value="HATPase_EvgS-ArcB-TorS-like"/>
    <property type="match status" value="1"/>
</dbReference>
<dbReference type="CDD" id="cd00082">
    <property type="entry name" value="HisKA"/>
    <property type="match status" value="1"/>
</dbReference>
<dbReference type="CDD" id="cd00130">
    <property type="entry name" value="PAS"/>
    <property type="match status" value="2"/>
</dbReference>
<dbReference type="CDD" id="cd17546">
    <property type="entry name" value="REC_hyHK_CKI1_RcsC-like"/>
    <property type="match status" value="1"/>
</dbReference>
<dbReference type="FunFam" id="1.10.287.130:FF:000030">
    <property type="entry name" value="Putative histidine kinase 5"/>
    <property type="match status" value="1"/>
</dbReference>
<dbReference type="FunFam" id="3.30.565.10:FF:000010">
    <property type="entry name" value="Sensor histidine kinase RcsC"/>
    <property type="match status" value="1"/>
</dbReference>
<dbReference type="FunFam" id="3.30.450.20:FF:000136">
    <property type="entry name" value="Sensor histidine kinase/response regulator Fos-1"/>
    <property type="match status" value="1"/>
</dbReference>
<dbReference type="FunFam" id="3.40.50.2300:FF:000410">
    <property type="entry name" value="Sensor histidine kinase/response regulator Fos-1"/>
    <property type="match status" value="1"/>
</dbReference>
<dbReference type="Gene3D" id="1.10.287.130">
    <property type="match status" value="1"/>
</dbReference>
<dbReference type="Gene3D" id="3.40.50.2300">
    <property type="match status" value="1"/>
</dbReference>
<dbReference type="Gene3D" id="3.30.565.10">
    <property type="entry name" value="Histidine kinase-like ATPase, C-terminal domain"/>
    <property type="match status" value="1"/>
</dbReference>
<dbReference type="Gene3D" id="3.30.450.20">
    <property type="entry name" value="PAS domain"/>
    <property type="match status" value="1"/>
</dbReference>
<dbReference type="InterPro" id="IPR011006">
    <property type="entry name" value="CheY-like_superfamily"/>
</dbReference>
<dbReference type="InterPro" id="IPR036890">
    <property type="entry name" value="HATPase_C_sf"/>
</dbReference>
<dbReference type="InterPro" id="IPR005467">
    <property type="entry name" value="His_kinase_dom"/>
</dbReference>
<dbReference type="InterPro" id="IPR003661">
    <property type="entry name" value="HisK_dim/P_dom"/>
</dbReference>
<dbReference type="InterPro" id="IPR036097">
    <property type="entry name" value="HisK_dim/P_sf"/>
</dbReference>
<dbReference type="InterPro" id="IPR001610">
    <property type="entry name" value="PAC"/>
</dbReference>
<dbReference type="InterPro" id="IPR000014">
    <property type="entry name" value="PAS"/>
</dbReference>
<dbReference type="InterPro" id="IPR000700">
    <property type="entry name" value="PAS-assoc_C"/>
</dbReference>
<dbReference type="InterPro" id="IPR035965">
    <property type="entry name" value="PAS-like_dom_sf"/>
</dbReference>
<dbReference type="InterPro" id="IPR004358">
    <property type="entry name" value="Sig_transdc_His_kin-like_C"/>
</dbReference>
<dbReference type="InterPro" id="IPR001789">
    <property type="entry name" value="Sig_transdc_resp-reg_receiver"/>
</dbReference>
<dbReference type="NCBIfam" id="TIGR00229">
    <property type="entry name" value="sensory_box"/>
    <property type="match status" value="1"/>
</dbReference>
<dbReference type="PANTHER" id="PTHR45339">
    <property type="entry name" value="HYBRID SIGNAL TRANSDUCTION HISTIDINE KINASE J"/>
    <property type="match status" value="1"/>
</dbReference>
<dbReference type="PANTHER" id="PTHR45339:SF1">
    <property type="entry name" value="HYBRID SIGNAL TRANSDUCTION HISTIDINE KINASE J"/>
    <property type="match status" value="1"/>
</dbReference>
<dbReference type="Pfam" id="PF02518">
    <property type="entry name" value="HATPase_c"/>
    <property type="match status" value="1"/>
</dbReference>
<dbReference type="Pfam" id="PF00512">
    <property type="entry name" value="HisKA"/>
    <property type="match status" value="1"/>
</dbReference>
<dbReference type="Pfam" id="PF13426">
    <property type="entry name" value="PAS_9"/>
    <property type="match status" value="1"/>
</dbReference>
<dbReference type="Pfam" id="PF00072">
    <property type="entry name" value="Response_reg"/>
    <property type="match status" value="1"/>
</dbReference>
<dbReference type="PRINTS" id="PR00344">
    <property type="entry name" value="BCTRLSENSOR"/>
</dbReference>
<dbReference type="SMART" id="SM00387">
    <property type="entry name" value="HATPase_c"/>
    <property type="match status" value="1"/>
</dbReference>
<dbReference type="SMART" id="SM00388">
    <property type="entry name" value="HisKA"/>
    <property type="match status" value="1"/>
</dbReference>
<dbReference type="SMART" id="SM00086">
    <property type="entry name" value="PAC"/>
    <property type="match status" value="1"/>
</dbReference>
<dbReference type="SMART" id="SM00091">
    <property type="entry name" value="PAS"/>
    <property type="match status" value="2"/>
</dbReference>
<dbReference type="SMART" id="SM00448">
    <property type="entry name" value="REC"/>
    <property type="match status" value="1"/>
</dbReference>
<dbReference type="SUPFAM" id="SSF55874">
    <property type="entry name" value="ATPase domain of HSP90 chaperone/DNA topoisomerase II/histidine kinase"/>
    <property type="match status" value="1"/>
</dbReference>
<dbReference type="SUPFAM" id="SSF52172">
    <property type="entry name" value="CheY-like"/>
    <property type="match status" value="1"/>
</dbReference>
<dbReference type="SUPFAM" id="SSF47384">
    <property type="entry name" value="Homodimeric domain of signal transducing histidine kinase"/>
    <property type="match status" value="1"/>
</dbReference>
<dbReference type="SUPFAM" id="SSF55785">
    <property type="entry name" value="PYP-like sensor domain (PAS domain)"/>
    <property type="match status" value="2"/>
</dbReference>
<dbReference type="PROSITE" id="PS50109">
    <property type="entry name" value="HIS_KIN"/>
    <property type="match status" value="1"/>
</dbReference>
<dbReference type="PROSITE" id="PS50113">
    <property type="entry name" value="PAC"/>
    <property type="match status" value="1"/>
</dbReference>
<dbReference type="PROSITE" id="PS50112">
    <property type="entry name" value="PAS"/>
    <property type="match status" value="1"/>
</dbReference>
<dbReference type="PROSITE" id="PS50110">
    <property type="entry name" value="RESPONSE_REGULATORY"/>
    <property type="match status" value="1"/>
</dbReference>
<feature type="chain" id="PRO_0000081411" description="Two-component system protein A">
    <location>
        <begin position="1"/>
        <end position="682"/>
    </location>
</feature>
<feature type="domain" description="PAS 1" evidence="3">
    <location>
        <begin position="45"/>
        <end position="105"/>
    </location>
</feature>
<feature type="domain" description="PAS 2" evidence="3">
    <location>
        <begin position="166"/>
        <end position="239"/>
    </location>
</feature>
<feature type="domain" description="PAC" evidence="4">
    <location>
        <begin position="241"/>
        <end position="292"/>
    </location>
</feature>
<feature type="domain" description="Histidine kinase" evidence="2">
    <location>
        <begin position="307"/>
        <end position="530"/>
    </location>
</feature>
<feature type="domain" description="Response regulatory" evidence="5">
    <location>
        <begin position="563"/>
        <end position="680"/>
    </location>
</feature>
<feature type="region of interest" description="Disordered" evidence="6">
    <location>
        <begin position="11"/>
        <end position="41"/>
    </location>
</feature>
<feature type="compositionally biased region" description="Basic and acidic residues" evidence="6">
    <location>
        <begin position="21"/>
        <end position="32"/>
    </location>
</feature>
<feature type="modified residue" description="Phosphohistidine; by autocatalysis" evidence="2">
    <location>
        <position position="310"/>
    </location>
</feature>
<feature type="modified residue" description="4-aspartylphosphate" evidence="5">
    <location>
        <position position="615"/>
    </location>
</feature>
<feature type="sequence conflict" description="In Ref. 1; CAB93498." evidence="8" ref="1">
    <original>LYS</original>
    <variation>SIV</variation>
    <location>
        <begin position="217"/>
        <end position="219"/>
    </location>
</feature>
<feature type="sequence conflict" description="In Ref. 1; CAB93498." evidence="8" ref="1">
    <original>MQ</original>
    <variation>IE</variation>
    <location>
        <begin position="319"/>
        <end position="320"/>
    </location>
</feature>
<feature type="sequence conflict" description="In Ref. 1; CAB93498." evidence="8" ref="1">
    <original>REH</original>
    <variation>GD</variation>
    <location>
        <begin position="336"/>
        <end position="338"/>
    </location>
</feature>
<feature type="sequence conflict" description="In Ref. 1; CAB93498." evidence="8" ref="1">
    <original>SGSF</original>
    <variation>IRLL</variation>
    <location>
        <begin position="364"/>
        <end position="367"/>
    </location>
</feature>
<feature type="sequence conflict" description="In Ref. 1; CAB93498." evidence="8" ref="1">
    <original>PTRMRG</original>
    <variation>HAHAW</variation>
    <location>
        <begin position="406"/>
        <end position="411"/>
    </location>
</feature>
<feature type="sequence conflict" description="In Ref. 1; CAB93498." evidence="8" ref="1">
    <original>TLFTPFSR</original>
    <variation>HSLHPLLA</variation>
    <location>
        <begin position="472"/>
        <end position="479"/>
    </location>
</feature>
<feature type="sequence conflict" description="In Ref. 1; CAB93498." evidence="8" ref="1">
    <original>VPTEVAS</original>
    <variation>YPRSCF</variation>
    <location>
        <begin position="547"/>
        <end position="553"/>
    </location>
</feature>
<feature type="sequence conflict" description="In Ref. 1; CAB93498." evidence="8" ref="1">
    <original>VMLKLLHTI</original>
    <variation>RYVEAPTYQF</variation>
    <location>
        <begin position="576"/>
        <end position="584"/>
    </location>
</feature>
<feature type="sequence conflict" description="In Ref. 1; CAB93498." evidence="8" ref="1">
    <original>T</original>
    <variation>RSPQSQHGYWTETRRYAFICMSWRQERYHGKSIYAAYRDL</variation>
    <location>
        <position position="682"/>
    </location>
</feature>
<protein>
    <recommendedName>
        <fullName>Two-component system protein A</fullName>
        <ecNumber>2.7.13.3</ecNumber>
    </recommendedName>
</protein>
<accession>Q9P896</accession>
<accession>C8VGY4</accession>
<accession>Q5B2D4</accession>
<reference evidence="9" key="1">
    <citation type="journal article" date="2000" name="Curr. Genet.">
        <title>A novel 'two-component' protein containing histidine kinase and response regulator domains required for sporulation in Aspergillus nidulans.</title>
        <authorList>
            <person name="Appleyard V.M.C.L."/>
            <person name="McPheat W.L."/>
            <person name="Stark M.J.R."/>
        </authorList>
    </citation>
    <scope>NUCLEOTIDE SEQUENCE [GENOMIC DNA]</scope>
    <scope>FUNCTION</scope>
    <source>
        <strain>biA1</strain>
    </source>
</reference>
<reference key="2">
    <citation type="journal article" date="2005" name="Nature">
        <title>Sequencing of Aspergillus nidulans and comparative analysis with A. fumigatus and A. oryzae.</title>
        <authorList>
            <person name="Galagan J.E."/>
            <person name="Calvo S.E."/>
            <person name="Cuomo C."/>
            <person name="Ma L.-J."/>
            <person name="Wortman J.R."/>
            <person name="Batzoglou S."/>
            <person name="Lee S.-I."/>
            <person name="Bastuerkmen M."/>
            <person name="Spevak C.C."/>
            <person name="Clutterbuck J."/>
            <person name="Kapitonov V."/>
            <person name="Jurka J."/>
            <person name="Scazzocchio C."/>
            <person name="Farman M.L."/>
            <person name="Butler J."/>
            <person name="Purcell S."/>
            <person name="Harris S."/>
            <person name="Braus G.H."/>
            <person name="Draht O."/>
            <person name="Busch S."/>
            <person name="D'Enfert C."/>
            <person name="Bouchier C."/>
            <person name="Goldman G.H."/>
            <person name="Bell-Pedersen D."/>
            <person name="Griffiths-Jones S."/>
            <person name="Doonan J.H."/>
            <person name="Yu J."/>
            <person name="Vienken K."/>
            <person name="Pain A."/>
            <person name="Freitag M."/>
            <person name="Selker E.U."/>
            <person name="Archer D.B."/>
            <person name="Penalva M.A."/>
            <person name="Oakley B.R."/>
            <person name="Momany M."/>
            <person name="Tanaka T."/>
            <person name="Kumagai T."/>
            <person name="Asai K."/>
            <person name="Machida M."/>
            <person name="Nierman W.C."/>
            <person name="Denning D.W."/>
            <person name="Caddick M.X."/>
            <person name="Hynes M."/>
            <person name="Paoletti M."/>
            <person name="Fischer R."/>
            <person name="Miller B.L."/>
            <person name="Dyer P.S."/>
            <person name="Sachs M.S."/>
            <person name="Osmani S.A."/>
            <person name="Birren B.W."/>
        </authorList>
    </citation>
    <scope>NUCLEOTIDE SEQUENCE [LARGE SCALE GENOMIC DNA]</scope>
    <source>
        <strain>FGSC A4 / ATCC 38163 / CBS 112.46 / NRRL 194 / M139</strain>
    </source>
</reference>
<reference key="3">
    <citation type="journal article" date="2009" name="Fungal Genet. Biol.">
        <title>The 2008 update of the Aspergillus nidulans genome annotation: a community effort.</title>
        <authorList>
            <person name="Wortman J.R."/>
            <person name="Gilsenan J.M."/>
            <person name="Joardar V."/>
            <person name="Deegan J."/>
            <person name="Clutterbuck J."/>
            <person name="Andersen M.R."/>
            <person name="Archer D."/>
            <person name="Bencina M."/>
            <person name="Braus G."/>
            <person name="Coutinho P."/>
            <person name="von Dohren H."/>
            <person name="Doonan J."/>
            <person name="Driessen A.J."/>
            <person name="Durek P."/>
            <person name="Espeso E."/>
            <person name="Fekete E."/>
            <person name="Flipphi M."/>
            <person name="Estrada C.G."/>
            <person name="Geysens S."/>
            <person name="Goldman G."/>
            <person name="de Groot P.W."/>
            <person name="Hansen K."/>
            <person name="Harris S.D."/>
            <person name="Heinekamp T."/>
            <person name="Helmstaedt K."/>
            <person name="Henrissat B."/>
            <person name="Hofmann G."/>
            <person name="Homan T."/>
            <person name="Horio T."/>
            <person name="Horiuchi H."/>
            <person name="James S."/>
            <person name="Jones M."/>
            <person name="Karaffa L."/>
            <person name="Karanyi Z."/>
            <person name="Kato M."/>
            <person name="Keller N."/>
            <person name="Kelly D.E."/>
            <person name="Kiel J.A."/>
            <person name="Kim J.M."/>
            <person name="van der Klei I.J."/>
            <person name="Klis F.M."/>
            <person name="Kovalchuk A."/>
            <person name="Krasevec N."/>
            <person name="Kubicek C.P."/>
            <person name="Liu B."/>
            <person name="Maccabe A."/>
            <person name="Meyer V."/>
            <person name="Mirabito P."/>
            <person name="Miskei M."/>
            <person name="Mos M."/>
            <person name="Mullins J."/>
            <person name="Nelson D.R."/>
            <person name="Nielsen J."/>
            <person name="Oakley B.R."/>
            <person name="Osmani S.A."/>
            <person name="Pakula T."/>
            <person name="Paszewski A."/>
            <person name="Paulsen I."/>
            <person name="Pilsyk S."/>
            <person name="Pocsi I."/>
            <person name="Punt P.J."/>
            <person name="Ram A.F."/>
            <person name="Ren Q."/>
            <person name="Robellet X."/>
            <person name="Robson G."/>
            <person name="Seiboth B."/>
            <person name="van Solingen P."/>
            <person name="Specht T."/>
            <person name="Sun J."/>
            <person name="Taheri-Talesh N."/>
            <person name="Takeshita N."/>
            <person name="Ussery D."/>
            <person name="vanKuyk P.A."/>
            <person name="Visser H."/>
            <person name="van de Vondervoort P.J."/>
            <person name="de Vries R.P."/>
            <person name="Walton J."/>
            <person name="Xiang X."/>
            <person name="Xiong Y."/>
            <person name="Zeng A.P."/>
            <person name="Brandt B.W."/>
            <person name="Cornell M.J."/>
            <person name="van den Hondel C.A."/>
            <person name="Visser J."/>
            <person name="Oliver S.G."/>
            <person name="Turner G."/>
        </authorList>
    </citation>
    <scope>GENOME REANNOTATION</scope>
    <source>
        <strain>FGSC A4 / ATCC 38163 / CBS 112.46 / NRRL 194 / M139</strain>
    </source>
</reference>
<proteinExistence type="inferred from homology"/>
<name>TCSA_EMENI</name>
<sequence length="682" mass="75316">MLLNGQISALSLDDNDNGQQHQDEVQAKHQDQGHTCPSRPSVPSLSRIYRCTPVPTIVLDASMVIIEVSNSHVALFGKPRDSLLHTSISDVSPECIPVPNIPILYGALRAACSTREIQVVEHVVVGEKIAHNLRVTPVYEDETLLFVVLEVENLRAEVINNQHAYMNETYKILVDTVKDYAIFMLDPTGHIATWNAGAGVLKGYKAEEIIGKHFSILYSPADRDNGKPARALDVCLREGRIEDEGWRYRRDGSRFWANVLITPIYQFGQHVGFVKVTRDLTERKEAEACMIAAFEESSRLKTDFLANISHEIRTPMNGMQIALTMLTDTGLSEEQREHANIVQDSMSLLLQIVNDVLDYSKLSSGSFSLHADMLDIREIVGAVVRNCRSSLQEGVELDTEISPKLPTRMRGDPLRYRQVLQNLVGNAVKFTEKGSIHVKITSSTDEEDSDSSVVRTEVTDTGIGVPDSAINTLFTPFSRFANSAARKYQGTGLGLSICKSLAELMDGSVGYSPNPNASGSVFWFTAKMGGRSVTPPSKSPSVSGSPVPTEVASEMRSIAPRKHVLLVEDNIVNHTVMLKLLHTIGFQRIDGAWNGAEAVRMVRQKPLSYDIILMDVSMPVLDGLAATEQIRDMGLTMPIIAITGNAMKGDAETYIAQGMDDCICKPVHRDQLLRVLWKWFGT</sequence>
<gene>
    <name evidence="9" type="primary">tcsA</name>
    <name type="ORF">AN5296</name>
</gene>